<sequence length="194" mass="21211">MNLIPTVIETTNRGERAYDIYSRLLKDRIIMLGSQIDDNVANSIVSQLLFLQAQDAEKDIYLYINSPGGSVTAGFAIYDTIQHIKPDVQTICIGMAASMGSFLLAAGAKGKRFALPNAEVMIHQPLGGAQGQATEIEIAANHILKTRAKLNQILAERTGQSIEKIEQDTDRDNFLSAEEAKDYGLVDQVMVPES</sequence>
<feature type="chain" id="PRO_0000226472" description="ATP-dependent Clp protease proteolytic subunit">
    <location>
        <begin position="1"/>
        <end position="194"/>
    </location>
</feature>
<feature type="active site" description="Nucleophile" evidence="1">
    <location>
        <position position="98"/>
    </location>
</feature>
<feature type="active site" evidence="1">
    <location>
        <position position="123"/>
    </location>
</feature>
<organism>
    <name type="scientific">Staphylococcus saprophyticus subsp. saprophyticus (strain ATCC 15305 / DSM 20229 / NCIMB 8711 / NCTC 7292 / S-41)</name>
    <dbReference type="NCBI Taxonomy" id="342451"/>
    <lineage>
        <taxon>Bacteria</taxon>
        <taxon>Bacillati</taxon>
        <taxon>Bacillota</taxon>
        <taxon>Bacilli</taxon>
        <taxon>Bacillales</taxon>
        <taxon>Staphylococcaceae</taxon>
        <taxon>Staphylococcus</taxon>
    </lineage>
</organism>
<proteinExistence type="inferred from homology"/>
<accession>Q49VZ2</accession>
<reference key="1">
    <citation type="journal article" date="2005" name="Proc. Natl. Acad. Sci. U.S.A.">
        <title>Whole genome sequence of Staphylococcus saprophyticus reveals the pathogenesis of uncomplicated urinary tract infection.</title>
        <authorList>
            <person name="Kuroda M."/>
            <person name="Yamashita A."/>
            <person name="Hirakawa H."/>
            <person name="Kumano M."/>
            <person name="Morikawa K."/>
            <person name="Higashide M."/>
            <person name="Maruyama A."/>
            <person name="Inose Y."/>
            <person name="Matoba K."/>
            <person name="Toh H."/>
            <person name="Kuhara S."/>
            <person name="Hattori M."/>
            <person name="Ohta T."/>
        </authorList>
    </citation>
    <scope>NUCLEOTIDE SEQUENCE [LARGE SCALE GENOMIC DNA]</scope>
    <source>
        <strain>ATCC 15305 / DSM 20229 / NCIMB 8711 / NCTC 7292 / S-41</strain>
    </source>
</reference>
<gene>
    <name evidence="1" type="primary">clpP</name>
    <name type="ordered locus">SSP1923</name>
</gene>
<dbReference type="EC" id="3.4.21.92" evidence="1"/>
<dbReference type="EMBL" id="AP008934">
    <property type="protein sequence ID" value="BAE19068.1"/>
    <property type="molecule type" value="Genomic_DNA"/>
</dbReference>
<dbReference type="RefSeq" id="WP_002483889.1">
    <property type="nucleotide sequence ID" value="NZ_MTGA01000039.1"/>
</dbReference>
<dbReference type="SMR" id="Q49VZ2"/>
<dbReference type="MEROPS" id="S14.001"/>
<dbReference type="GeneID" id="66868106"/>
<dbReference type="KEGG" id="ssp:SSP1923"/>
<dbReference type="eggNOG" id="COG0740">
    <property type="taxonomic scope" value="Bacteria"/>
</dbReference>
<dbReference type="HOGENOM" id="CLU_058707_3_2_9"/>
<dbReference type="OrthoDB" id="9802800at2"/>
<dbReference type="Proteomes" id="UP000006371">
    <property type="component" value="Chromosome"/>
</dbReference>
<dbReference type="GO" id="GO:0005737">
    <property type="term" value="C:cytoplasm"/>
    <property type="evidence" value="ECO:0007669"/>
    <property type="project" value="UniProtKB-SubCell"/>
</dbReference>
<dbReference type="GO" id="GO:0009368">
    <property type="term" value="C:endopeptidase Clp complex"/>
    <property type="evidence" value="ECO:0007669"/>
    <property type="project" value="TreeGrafter"/>
</dbReference>
<dbReference type="GO" id="GO:0004176">
    <property type="term" value="F:ATP-dependent peptidase activity"/>
    <property type="evidence" value="ECO:0007669"/>
    <property type="project" value="InterPro"/>
</dbReference>
<dbReference type="GO" id="GO:0051117">
    <property type="term" value="F:ATPase binding"/>
    <property type="evidence" value="ECO:0007669"/>
    <property type="project" value="TreeGrafter"/>
</dbReference>
<dbReference type="GO" id="GO:0004252">
    <property type="term" value="F:serine-type endopeptidase activity"/>
    <property type="evidence" value="ECO:0007669"/>
    <property type="project" value="UniProtKB-UniRule"/>
</dbReference>
<dbReference type="GO" id="GO:0006515">
    <property type="term" value="P:protein quality control for misfolded or incompletely synthesized proteins"/>
    <property type="evidence" value="ECO:0007669"/>
    <property type="project" value="TreeGrafter"/>
</dbReference>
<dbReference type="CDD" id="cd07017">
    <property type="entry name" value="S14_ClpP_2"/>
    <property type="match status" value="1"/>
</dbReference>
<dbReference type="FunFam" id="3.90.226.10:FF:000001">
    <property type="entry name" value="ATP-dependent Clp protease proteolytic subunit"/>
    <property type="match status" value="1"/>
</dbReference>
<dbReference type="Gene3D" id="3.90.226.10">
    <property type="entry name" value="2-enoyl-CoA Hydratase, Chain A, domain 1"/>
    <property type="match status" value="1"/>
</dbReference>
<dbReference type="HAMAP" id="MF_00444">
    <property type="entry name" value="ClpP"/>
    <property type="match status" value="1"/>
</dbReference>
<dbReference type="InterPro" id="IPR001907">
    <property type="entry name" value="ClpP"/>
</dbReference>
<dbReference type="InterPro" id="IPR029045">
    <property type="entry name" value="ClpP/crotonase-like_dom_sf"/>
</dbReference>
<dbReference type="InterPro" id="IPR023562">
    <property type="entry name" value="ClpP/TepA"/>
</dbReference>
<dbReference type="InterPro" id="IPR033135">
    <property type="entry name" value="ClpP_His_AS"/>
</dbReference>
<dbReference type="InterPro" id="IPR018215">
    <property type="entry name" value="ClpP_Ser_AS"/>
</dbReference>
<dbReference type="NCBIfam" id="TIGR00493">
    <property type="entry name" value="clpP"/>
    <property type="match status" value="1"/>
</dbReference>
<dbReference type="NCBIfam" id="NF001368">
    <property type="entry name" value="PRK00277.1"/>
    <property type="match status" value="1"/>
</dbReference>
<dbReference type="NCBIfam" id="NF009205">
    <property type="entry name" value="PRK12553.1"/>
    <property type="match status" value="1"/>
</dbReference>
<dbReference type="PANTHER" id="PTHR10381">
    <property type="entry name" value="ATP-DEPENDENT CLP PROTEASE PROTEOLYTIC SUBUNIT"/>
    <property type="match status" value="1"/>
</dbReference>
<dbReference type="PANTHER" id="PTHR10381:SF70">
    <property type="entry name" value="ATP-DEPENDENT CLP PROTEASE PROTEOLYTIC SUBUNIT"/>
    <property type="match status" value="1"/>
</dbReference>
<dbReference type="Pfam" id="PF00574">
    <property type="entry name" value="CLP_protease"/>
    <property type="match status" value="1"/>
</dbReference>
<dbReference type="PRINTS" id="PR00127">
    <property type="entry name" value="CLPPROTEASEP"/>
</dbReference>
<dbReference type="SUPFAM" id="SSF52096">
    <property type="entry name" value="ClpP/crotonase"/>
    <property type="match status" value="1"/>
</dbReference>
<dbReference type="PROSITE" id="PS00382">
    <property type="entry name" value="CLP_PROTEASE_HIS"/>
    <property type="match status" value="1"/>
</dbReference>
<dbReference type="PROSITE" id="PS00381">
    <property type="entry name" value="CLP_PROTEASE_SER"/>
    <property type="match status" value="1"/>
</dbReference>
<name>CLPP_STAS1</name>
<protein>
    <recommendedName>
        <fullName evidence="1">ATP-dependent Clp protease proteolytic subunit</fullName>
        <ecNumber evidence="1">3.4.21.92</ecNumber>
    </recommendedName>
    <alternativeName>
        <fullName evidence="1">Endopeptidase Clp</fullName>
    </alternativeName>
</protein>
<keyword id="KW-0963">Cytoplasm</keyword>
<keyword id="KW-0378">Hydrolase</keyword>
<keyword id="KW-0645">Protease</keyword>
<keyword id="KW-1185">Reference proteome</keyword>
<keyword id="KW-0720">Serine protease</keyword>
<evidence type="ECO:0000255" key="1">
    <source>
        <dbReference type="HAMAP-Rule" id="MF_00444"/>
    </source>
</evidence>
<comment type="function">
    <text evidence="1">Cleaves peptides in various proteins in a process that requires ATP hydrolysis. Has a chymotrypsin-like activity. Plays a major role in the degradation of misfolded proteins.</text>
</comment>
<comment type="catalytic activity">
    <reaction evidence="1">
        <text>Hydrolysis of proteins to small peptides in the presence of ATP and magnesium. alpha-casein is the usual test substrate. In the absence of ATP, only oligopeptides shorter than five residues are hydrolyzed (such as succinyl-Leu-Tyr-|-NHMec, and Leu-Tyr-Leu-|-Tyr-Trp, in which cleavage of the -Tyr-|-Leu- and -Tyr-|-Trp bonds also occurs).</text>
        <dbReference type="EC" id="3.4.21.92"/>
    </reaction>
</comment>
<comment type="subunit">
    <text evidence="1">Fourteen ClpP subunits assemble into 2 heptameric rings which stack back to back to give a disk-like structure with a central cavity, resembling the structure of eukaryotic proteasomes.</text>
</comment>
<comment type="subcellular location">
    <subcellularLocation>
        <location evidence="1">Cytoplasm</location>
    </subcellularLocation>
</comment>
<comment type="similarity">
    <text evidence="1">Belongs to the peptidase S14 family.</text>
</comment>